<evidence type="ECO:0000250" key="1"/>
<evidence type="ECO:0000255" key="2">
    <source>
        <dbReference type="HAMAP-Rule" id="MF_01158"/>
    </source>
</evidence>
<protein>
    <recommendedName>
        <fullName evidence="2">DnaA regulatory inactivator Hda</fullName>
    </recommendedName>
</protein>
<keyword id="KW-0235">DNA replication</keyword>
<keyword id="KW-0236">DNA replication inhibitor</keyword>
<organism>
    <name type="scientific">Yersinia pseudotuberculosis serotype I (strain IP32953)</name>
    <dbReference type="NCBI Taxonomy" id="273123"/>
    <lineage>
        <taxon>Bacteria</taxon>
        <taxon>Pseudomonadati</taxon>
        <taxon>Pseudomonadota</taxon>
        <taxon>Gammaproteobacteria</taxon>
        <taxon>Enterobacterales</taxon>
        <taxon>Yersiniaceae</taxon>
        <taxon>Yersinia</taxon>
    </lineage>
</organism>
<accession>Q668E8</accession>
<dbReference type="EMBL" id="BX936398">
    <property type="protein sequence ID" value="CAH22030.1"/>
    <property type="molecule type" value="Genomic_DNA"/>
</dbReference>
<dbReference type="RefSeq" id="WP_002228401.1">
    <property type="nucleotide sequence ID" value="NZ_CP009712.1"/>
</dbReference>
<dbReference type="SMR" id="Q668E8"/>
<dbReference type="GeneID" id="96666285"/>
<dbReference type="KEGG" id="ypo:BZ17_3839"/>
<dbReference type="KEGG" id="yps:YPTB2792"/>
<dbReference type="PATRIC" id="fig|273123.14.peg.4029"/>
<dbReference type="Proteomes" id="UP000001011">
    <property type="component" value="Chromosome"/>
</dbReference>
<dbReference type="GO" id="GO:0006270">
    <property type="term" value="P:DNA replication initiation"/>
    <property type="evidence" value="ECO:0007669"/>
    <property type="project" value="TreeGrafter"/>
</dbReference>
<dbReference type="GO" id="GO:0032297">
    <property type="term" value="P:negative regulation of DNA-templated DNA replication initiation"/>
    <property type="evidence" value="ECO:0007669"/>
    <property type="project" value="InterPro"/>
</dbReference>
<dbReference type="FunFam" id="1.10.8.60:FF:000024">
    <property type="entry name" value="DnaA regulatory inactivator Hda"/>
    <property type="match status" value="1"/>
</dbReference>
<dbReference type="FunFam" id="3.40.50.300:FF:000452">
    <property type="entry name" value="DnaA regulatory inactivator Hda"/>
    <property type="match status" value="1"/>
</dbReference>
<dbReference type="Gene3D" id="1.10.8.60">
    <property type="match status" value="1"/>
</dbReference>
<dbReference type="Gene3D" id="3.40.50.300">
    <property type="entry name" value="P-loop containing nucleotide triphosphate hydrolases"/>
    <property type="match status" value="1"/>
</dbReference>
<dbReference type="HAMAP" id="MF_01158">
    <property type="entry name" value="Hda"/>
    <property type="match status" value="1"/>
</dbReference>
<dbReference type="InterPro" id="IPR020591">
    <property type="entry name" value="Chromosome_initiator_DnaA-like"/>
</dbReference>
<dbReference type="InterPro" id="IPR013317">
    <property type="entry name" value="DnaA_dom"/>
</dbReference>
<dbReference type="InterPro" id="IPR017788">
    <property type="entry name" value="Hda"/>
</dbReference>
<dbReference type="InterPro" id="IPR022864">
    <property type="entry name" value="Hda_Enterobact"/>
</dbReference>
<dbReference type="InterPro" id="IPR055199">
    <property type="entry name" value="Hda_lid"/>
</dbReference>
<dbReference type="InterPro" id="IPR027417">
    <property type="entry name" value="P-loop_NTPase"/>
</dbReference>
<dbReference type="NCBIfam" id="TIGR03420">
    <property type="entry name" value="DnaA_homol_Hda"/>
    <property type="match status" value="1"/>
</dbReference>
<dbReference type="NCBIfam" id="NF005982">
    <property type="entry name" value="PRK08084.1"/>
    <property type="match status" value="1"/>
</dbReference>
<dbReference type="PANTHER" id="PTHR30050">
    <property type="entry name" value="CHROMOSOMAL REPLICATION INITIATOR PROTEIN DNAA"/>
    <property type="match status" value="1"/>
</dbReference>
<dbReference type="PANTHER" id="PTHR30050:SF5">
    <property type="entry name" value="DNAA REGULATORY INACTIVATOR HDA"/>
    <property type="match status" value="1"/>
</dbReference>
<dbReference type="Pfam" id="PF00308">
    <property type="entry name" value="Bac_DnaA"/>
    <property type="match status" value="1"/>
</dbReference>
<dbReference type="Pfam" id="PF22688">
    <property type="entry name" value="Hda_lid"/>
    <property type="match status" value="1"/>
</dbReference>
<dbReference type="PRINTS" id="PR00051">
    <property type="entry name" value="DNAA"/>
</dbReference>
<dbReference type="SUPFAM" id="SSF52540">
    <property type="entry name" value="P-loop containing nucleoside triphosphate hydrolases"/>
    <property type="match status" value="1"/>
</dbReference>
<sequence>MLLNTPAQLSLPLYLPDDETFASFYPGENPSLLAAIQSAVHQPHGSYIYFWSREGGGRSHLLHAACAELSQQGEAVGYVPLDKRAYFIPEVLEGMEQLALVCIDNIECIAGDEQWEMAMFNLYNRIVETGRTRLLITGDRPPRQLNLGLPDLASRLDWGQIYKLQPLSDDEKLQALQLRAKLRGFELPEDVGRFLLKRLDREMRTLFMTLDQLDRASITAQRKLTIPFVKEILSL</sequence>
<feature type="chain" id="PRO_0000114323" description="DnaA regulatory inactivator Hda">
    <location>
        <begin position="1"/>
        <end position="235"/>
    </location>
</feature>
<gene>
    <name evidence="2" type="primary">hda</name>
    <name type="ordered locus">YPTB2792</name>
</gene>
<name>HDA_YERPS</name>
<proteinExistence type="inferred from homology"/>
<comment type="function">
    <text evidence="1">Mediates the interaction of DNA replication initiator protein DnaA with DNA polymerase subunit beta sliding clamp (dnaN). Stimulates hydrolysis of ATP-DnaA to ADP-DnaA, rendering DnaA inactive for reinitiation, a process called regulatory inhibition of DnaA or RIDA (By similarity).</text>
</comment>
<comment type="subunit">
    <text evidence="2">The active form seems to be an ADP-bound monomer. Forms the RIDA complex (regulatory inactivation of DnaA) of ATP-DnaA, ADP-Hda and the DNA-loaded beta sliding clamp (dnaN).</text>
</comment>
<comment type="similarity">
    <text evidence="2">Belongs to the DnaA family. HdA subfamily.</text>
</comment>
<reference key="1">
    <citation type="journal article" date="2004" name="Proc. Natl. Acad. Sci. U.S.A.">
        <title>Insights into the evolution of Yersinia pestis through whole-genome comparison with Yersinia pseudotuberculosis.</title>
        <authorList>
            <person name="Chain P.S.G."/>
            <person name="Carniel E."/>
            <person name="Larimer F.W."/>
            <person name="Lamerdin J."/>
            <person name="Stoutland P.O."/>
            <person name="Regala W.M."/>
            <person name="Georgescu A.M."/>
            <person name="Vergez L.M."/>
            <person name="Land M.L."/>
            <person name="Motin V.L."/>
            <person name="Brubaker R.R."/>
            <person name="Fowler J."/>
            <person name="Hinnebusch J."/>
            <person name="Marceau M."/>
            <person name="Medigue C."/>
            <person name="Simonet M."/>
            <person name="Chenal-Francisque V."/>
            <person name="Souza B."/>
            <person name="Dacheux D."/>
            <person name="Elliott J.M."/>
            <person name="Derbise A."/>
            <person name="Hauser L.J."/>
            <person name="Garcia E."/>
        </authorList>
    </citation>
    <scope>NUCLEOTIDE SEQUENCE [LARGE SCALE GENOMIC DNA]</scope>
    <source>
        <strain>IP32953</strain>
    </source>
</reference>